<name>NADK_GEOMG</name>
<accession>Q39X41</accession>
<dbReference type="EC" id="2.7.1.23" evidence="1"/>
<dbReference type="EMBL" id="CP000148">
    <property type="protein sequence ID" value="ABB31183.1"/>
    <property type="molecule type" value="Genomic_DNA"/>
</dbReference>
<dbReference type="RefSeq" id="WP_004514424.1">
    <property type="nucleotide sequence ID" value="NC_007517.1"/>
</dbReference>
<dbReference type="SMR" id="Q39X41"/>
<dbReference type="STRING" id="269799.Gmet_0941"/>
<dbReference type="KEGG" id="gme:Gmet_0941"/>
<dbReference type="eggNOG" id="COG0061">
    <property type="taxonomic scope" value="Bacteria"/>
</dbReference>
<dbReference type="HOGENOM" id="CLU_008831_0_1_7"/>
<dbReference type="Proteomes" id="UP000007073">
    <property type="component" value="Chromosome"/>
</dbReference>
<dbReference type="GO" id="GO:0005737">
    <property type="term" value="C:cytoplasm"/>
    <property type="evidence" value="ECO:0007669"/>
    <property type="project" value="UniProtKB-SubCell"/>
</dbReference>
<dbReference type="GO" id="GO:0005524">
    <property type="term" value="F:ATP binding"/>
    <property type="evidence" value="ECO:0007669"/>
    <property type="project" value="UniProtKB-KW"/>
</dbReference>
<dbReference type="GO" id="GO:0046872">
    <property type="term" value="F:metal ion binding"/>
    <property type="evidence" value="ECO:0007669"/>
    <property type="project" value="UniProtKB-UniRule"/>
</dbReference>
<dbReference type="GO" id="GO:0051287">
    <property type="term" value="F:NAD binding"/>
    <property type="evidence" value="ECO:0007669"/>
    <property type="project" value="UniProtKB-ARBA"/>
</dbReference>
<dbReference type="GO" id="GO:0003951">
    <property type="term" value="F:NAD+ kinase activity"/>
    <property type="evidence" value="ECO:0007669"/>
    <property type="project" value="UniProtKB-UniRule"/>
</dbReference>
<dbReference type="GO" id="GO:0019674">
    <property type="term" value="P:NAD metabolic process"/>
    <property type="evidence" value="ECO:0007669"/>
    <property type="project" value="InterPro"/>
</dbReference>
<dbReference type="GO" id="GO:0006741">
    <property type="term" value="P:NADP biosynthetic process"/>
    <property type="evidence" value="ECO:0007669"/>
    <property type="project" value="UniProtKB-UniRule"/>
</dbReference>
<dbReference type="FunFam" id="2.60.200.30:FF:000009">
    <property type="entry name" value="Poly(P)/ATP NAD kinase"/>
    <property type="match status" value="1"/>
</dbReference>
<dbReference type="Gene3D" id="3.40.50.10330">
    <property type="entry name" value="Probable inorganic polyphosphate/atp-NAD kinase, domain 1"/>
    <property type="match status" value="1"/>
</dbReference>
<dbReference type="Gene3D" id="2.60.200.30">
    <property type="entry name" value="Probable inorganic polyphosphate/atp-NAD kinase, domain 2"/>
    <property type="match status" value="1"/>
</dbReference>
<dbReference type="HAMAP" id="MF_00361">
    <property type="entry name" value="NAD_kinase"/>
    <property type="match status" value="1"/>
</dbReference>
<dbReference type="InterPro" id="IPR017438">
    <property type="entry name" value="ATP-NAD_kinase_N"/>
</dbReference>
<dbReference type="InterPro" id="IPR017437">
    <property type="entry name" value="ATP-NAD_kinase_PpnK-typ_C"/>
</dbReference>
<dbReference type="InterPro" id="IPR016064">
    <property type="entry name" value="NAD/diacylglycerol_kinase_sf"/>
</dbReference>
<dbReference type="InterPro" id="IPR002504">
    <property type="entry name" value="NADK"/>
</dbReference>
<dbReference type="PANTHER" id="PTHR20275">
    <property type="entry name" value="NAD KINASE"/>
    <property type="match status" value="1"/>
</dbReference>
<dbReference type="PANTHER" id="PTHR20275:SF0">
    <property type="entry name" value="NAD KINASE"/>
    <property type="match status" value="1"/>
</dbReference>
<dbReference type="Pfam" id="PF01513">
    <property type="entry name" value="NAD_kinase"/>
    <property type="match status" value="1"/>
</dbReference>
<dbReference type="Pfam" id="PF20143">
    <property type="entry name" value="NAD_kinase_C"/>
    <property type="match status" value="1"/>
</dbReference>
<dbReference type="SUPFAM" id="SSF111331">
    <property type="entry name" value="NAD kinase/diacylglycerol kinase-like"/>
    <property type="match status" value="1"/>
</dbReference>
<feature type="chain" id="PRO_0000229639" description="NAD kinase">
    <location>
        <begin position="1"/>
        <end position="283"/>
    </location>
</feature>
<feature type="active site" description="Proton acceptor" evidence="1">
    <location>
        <position position="66"/>
    </location>
</feature>
<feature type="binding site" evidence="1">
    <location>
        <begin position="66"/>
        <end position="67"/>
    </location>
    <ligand>
        <name>NAD(+)</name>
        <dbReference type="ChEBI" id="CHEBI:57540"/>
    </ligand>
</feature>
<feature type="binding site" evidence="1">
    <location>
        <begin position="140"/>
        <end position="141"/>
    </location>
    <ligand>
        <name>NAD(+)</name>
        <dbReference type="ChEBI" id="CHEBI:57540"/>
    </ligand>
</feature>
<feature type="binding site" evidence="1">
    <location>
        <position position="151"/>
    </location>
    <ligand>
        <name>NAD(+)</name>
        <dbReference type="ChEBI" id="CHEBI:57540"/>
    </ligand>
</feature>
<feature type="binding site" evidence="1">
    <location>
        <position position="168"/>
    </location>
    <ligand>
        <name>NAD(+)</name>
        <dbReference type="ChEBI" id="CHEBI:57540"/>
    </ligand>
</feature>
<feature type="binding site" evidence="1">
    <location>
        <position position="170"/>
    </location>
    <ligand>
        <name>NAD(+)</name>
        <dbReference type="ChEBI" id="CHEBI:57540"/>
    </ligand>
</feature>
<feature type="binding site" evidence="1">
    <location>
        <begin position="181"/>
        <end position="186"/>
    </location>
    <ligand>
        <name>NAD(+)</name>
        <dbReference type="ChEBI" id="CHEBI:57540"/>
    </ligand>
</feature>
<feature type="binding site" evidence="1">
    <location>
        <position position="240"/>
    </location>
    <ligand>
        <name>NAD(+)</name>
        <dbReference type="ChEBI" id="CHEBI:57540"/>
    </ligand>
</feature>
<gene>
    <name evidence="1" type="primary">nadK</name>
    <name type="ordered locus">Gmet_0941</name>
</gene>
<sequence>MKKIAIFAKVHDPRCQGVAGELITWLEQRRIVPLVEAHFARHLGRSGVTSEEIPDLADMAVVLGGDGTLISAARLLGGREIPILGVNLGSLGFLTEVTLDELYPALEACLGGDYRVSERMMLAATVERGDDIVFSHRVLNDAVINKGALARIVDMESLVNGHYLTTYKADGLIISTPTGSTGYCLSANGPIVHPDLECLTITPICPHTLTNRPIVLEASAEVTIRLISKNEDVYLTLDGQVGMELKCGDIIRVRRAEHRTRLVMSRSKDYFEVLRTKLKWGER</sequence>
<keyword id="KW-0067">ATP-binding</keyword>
<keyword id="KW-0963">Cytoplasm</keyword>
<keyword id="KW-0418">Kinase</keyword>
<keyword id="KW-0520">NAD</keyword>
<keyword id="KW-0521">NADP</keyword>
<keyword id="KW-0547">Nucleotide-binding</keyword>
<keyword id="KW-1185">Reference proteome</keyword>
<keyword id="KW-0808">Transferase</keyword>
<comment type="function">
    <text evidence="1">Involved in the regulation of the intracellular balance of NAD and NADP, and is a key enzyme in the biosynthesis of NADP. Catalyzes specifically the phosphorylation on 2'-hydroxyl of the adenosine moiety of NAD to yield NADP.</text>
</comment>
<comment type="catalytic activity">
    <reaction evidence="1">
        <text>NAD(+) + ATP = ADP + NADP(+) + H(+)</text>
        <dbReference type="Rhea" id="RHEA:18629"/>
        <dbReference type="ChEBI" id="CHEBI:15378"/>
        <dbReference type="ChEBI" id="CHEBI:30616"/>
        <dbReference type="ChEBI" id="CHEBI:57540"/>
        <dbReference type="ChEBI" id="CHEBI:58349"/>
        <dbReference type="ChEBI" id="CHEBI:456216"/>
        <dbReference type="EC" id="2.7.1.23"/>
    </reaction>
</comment>
<comment type="cofactor">
    <cofactor evidence="1">
        <name>a divalent metal cation</name>
        <dbReference type="ChEBI" id="CHEBI:60240"/>
    </cofactor>
</comment>
<comment type="subcellular location">
    <subcellularLocation>
        <location evidence="1">Cytoplasm</location>
    </subcellularLocation>
</comment>
<comment type="similarity">
    <text evidence="1">Belongs to the NAD kinase family.</text>
</comment>
<organism>
    <name type="scientific">Geobacter metallireducens (strain ATCC 53774 / DSM 7210 / GS-15)</name>
    <dbReference type="NCBI Taxonomy" id="269799"/>
    <lineage>
        <taxon>Bacteria</taxon>
        <taxon>Pseudomonadati</taxon>
        <taxon>Thermodesulfobacteriota</taxon>
        <taxon>Desulfuromonadia</taxon>
        <taxon>Geobacterales</taxon>
        <taxon>Geobacteraceae</taxon>
        <taxon>Geobacter</taxon>
    </lineage>
</organism>
<proteinExistence type="inferred from homology"/>
<protein>
    <recommendedName>
        <fullName evidence="1">NAD kinase</fullName>
        <ecNumber evidence="1">2.7.1.23</ecNumber>
    </recommendedName>
    <alternativeName>
        <fullName evidence="1">ATP-dependent NAD kinase</fullName>
    </alternativeName>
</protein>
<evidence type="ECO:0000255" key="1">
    <source>
        <dbReference type="HAMAP-Rule" id="MF_00361"/>
    </source>
</evidence>
<reference key="1">
    <citation type="journal article" date="2009" name="BMC Microbiol.">
        <title>The genome sequence of Geobacter metallireducens: features of metabolism, physiology and regulation common and dissimilar to Geobacter sulfurreducens.</title>
        <authorList>
            <person name="Aklujkar M."/>
            <person name="Krushkal J."/>
            <person name="DiBartolo G."/>
            <person name="Lapidus A."/>
            <person name="Land M.L."/>
            <person name="Lovley D.R."/>
        </authorList>
    </citation>
    <scope>NUCLEOTIDE SEQUENCE [LARGE SCALE GENOMIC DNA]</scope>
    <source>
        <strain>ATCC 53774 / DSM 7210 / GS-15</strain>
    </source>
</reference>